<gene>
    <name type="ordered locus">YpsIP31758_1127</name>
</gene>
<organism>
    <name type="scientific">Yersinia pseudotuberculosis serotype O:1b (strain IP 31758)</name>
    <dbReference type="NCBI Taxonomy" id="349747"/>
    <lineage>
        <taxon>Bacteria</taxon>
        <taxon>Pseudomonadati</taxon>
        <taxon>Pseudomonadota</taxon>
        <taxon>Gammaproteobacteria</taxon>
        <taxon>Enterobacterales</taxon>
        <taxon>Yersiniaceae</taxon>
        <taxon>Yersinia</taxon>
    </lineage>
</organism>
<dbReference type="EC" id="2.1.1.223" evidence="1"/>
<dbReference type="EMBL" id="CP000720">
    <property type="protein sequence ID" value="ABS49088.1"/>
    <property type="molecule type" value="Genomic_DNA"/>
</dbReference>
<dbReference type="SMR" id="A7FFT0"/>
<dbReference type="KEGG" id="ypi:YpsIP31758_1127"/>
<dbReference type="HOGENOM" id="CLU_061983_0_0_6"/>
<dbReference type="Proteomes" id="UP000002412">
    <property type="component" value="Chromosome"/>
</dbReference>
<dbReference type="GO" id="GO:0005737">
    <property type="term" value="C:cytoplasm"/>
    <property type="evidence" value="ECO:0007669"/>
    <property type="project" value="UniProtKB-SubCell"/>
</dbReference>
<dbReference type="GO" id="GO:0003676">
    <property type="term" value="F:nucleic acid binding"/>
    <property type="evidence" value="ECO:0007669"/>
    <property type="project" value="InterPro"/>
</dbReference>
<dbReference type="GO" id="GO:0016430">
    <property type="term" value="F:tRNA (adenine-N6)-methyltransferase activity"/>
    <property type="evidence" value="ECO:0007669"/>
    <property type="project" value="UniProtKB-UniRule"/>
</dbReference>
<dbReference type="GO" id="GO:0032259">
    <property type="term" value="P:methylation"/>
    <property type="evidence" value="ECO:0007669"/>
    <property type="project" value="UniProtKB-KW"/>
</dbReference>
<dbReference type="GO" id="GO:0008033">
    <property type="term" value="P:tRNA processing"/>
    <property type="evidence" value="ECO:0007669"/>
    <property type="project" value="UniProtKB-UniRule"/>
</dbReference>
<dbReference type="CDD" id="cd02440">
    <property type="entry name" value="AdoMet_MTases"/>
    <property type="match status" value="1"/>
</dbReference>
<dbReference type="Gene3D" id="3.40.50.150">
    <property type="entry name" value="Vaccinia Virus protein VP39"/>
    <property type="match status" value="1"/>
</dbReference>
<dbReference type="HAMAP" id="MF_01872">
    <property type="entry name" value="tRNA_methyltr_YfiC"/>
    <property type="match status" value="1"/>
</dbReference>
<dbReference type="InterPro" id="IPR002052">
    <property type="entry name" value="DNA_methylase_N6_adenine_CS"/>
</dbReference>
<dbReference type="InterPro" id="IPR029063">
    <property type="entry name" value="SAM-dependent_MTases_sf"/>
</dbReference>
<dbReference type="InterPro" id="IPR007848">
    <property type="entry name" value="Small_mtfrase_dom"/>
</dbReference>
<dbReference type="InterPro" id="IPR050210">
    <property type="entry name" value="tRNA_Adenine-N(6)_MTase"/>
</dbReference>
<dbReference type="InterPro" id="IPR022882">
    <property type="entry name" value="tRNA_adenine-N6_MeTrfase"/>
</dbReference>
<dbReference type="NCBIfam" id="NF047853">
    <property type="entry name" value="tRm6a37MtseTrmN"/>
    <property type="match status" value="1"/>
</dbReference>
<dbReference type="PANTHER" id="PTHR47739">
    <property type="entry name" value="TRNA1(VAL) (ADENINE(37)-N6)-METHYLTRANSFERASE"/>
    <property type="match status" value="1"/>
</dbReference>
<dbReference type="PANTHER" id="PTHR47739:SF1">
    <property type="entry name" value="TRNA1(VAL) (ADENINE(37)-N6)-METHYLTRANSFERASE"/>
    <property type="match status" value="1"/>
</dbReference>
<dbReference type="Pfam" id="PF05175">
    <property type="entry name" value="MTS"/>
    <property type="match status" value="1"/>
</dbReference>
<dbReference type="PRINTS" id="PR00507">
    <property type="entry name" value="N12N6MTFRASE"/>
</dbReference>
<dbReference type="SUPFAM" id="SSF53335">
    <property type="entry name" value="S-adenosyl-L-methionine-dependent methyltransferases"/>
    <property type="match status" value="1"/>
</dbReference>
<dbReference type="PROSITE" id="PS00092">
    <property type="entry name" value="N6_MTASE"/>
    <property type="match status" value="1"/>
</dbReference>
<evidence type="ECO:0000255" key="1">
    <source>
        <dbReference type="HAMAP-Rule" id="MF_01872"/>
    </source>
</evidence>
<protein>
    <recommendedName>
        <fullName evidence="1">tRNA1(Val) (adenine(37)-N6)-methyltransferase</fullName>
        <ecNumber evidence="1">2.1.1.223</ecNumber>
    </recommendedName>
    <alternativeName>
        <fullName evidence="1">tRNA m6A37 methyltransferase</fullName>
    </alternativeName>
</protein>
<keyword id="KW-0963">Cytoplasm</keyword>
<keyword id="KW-0489">Methyltransferase</keyword>
<keyword id="KW-0949">S-adenosyl-L-methionine</keyword>
<keyword id="KW-0808">Transferase</keyword>
<keyword id="KW-0819">tRNA processing</keyword>
<proteinExistence type="inferred from homology"/>
<comment type="function">
    <text evidence="1">Specifically methylates the adenine in position 37 of tRNA(1)(Val) (anticodon cmo5UAC).</text>
</comment>
<comment type="catalytic activity">
    <reaction evidence="1">
        <text>adenosine(37) in tRNA1(Val) + S-adenosyl-L-methionine = N(6)-methyladenosine(37) in tRNA1(Val) + S-adenosyl-L-homocysteine + H(+)</text>
        <dbReference type="Rhea" id="RHEA:43160"/>
        <dbReference type="Rhea" id="RHEA-COMP:10369"/>
        <dbReference type="Rhea" id="RHEA-COMP:10370"/>
        <dbReference type="ChEBI" id="CHEBI:15378"/>
        <dbReference type="ChEBI" id="CHEBI:57856"/>
        <dbReference type="ChEBI" id="CHEBI:59789"/>
        <dbReference type="ChEBI" id="CHEBI:74411"/>
        <dbReference type="ChEBI" id="CHEBI:74449"/>
        <dbReference type="EC" id="2.1.1.223"/>
    </reaction>
</comment>
<comment type="subcellular location">
    <subcellularLocation>
        <location evidence="1">Cytoplasm</location>
    </subcellularLocation>
</comment>
<comment type="similarity">
    <text evidence="1">Belongs to the methyltransferase superfamily. tRNA (adenine-N(6)-)-methyltransferase family.</text>
</comment>
<sequence length="248" mass="27761">MGEQLKKQPVLRGGGFTFKQFFVAHDRCAMKVGTDGVLLGAWVPVLHARRVLDIGCGSGLIALMIAQRSLPQVQIDGVELEPAAAQQASSNVELSPWAERIHIHQQDIHQFAENHPHQYDLIVSNPPYFAPAIACRDEARDTARYTGSLTHDALLNCAEKLITEDGMFCVVLPHELGIEFARLAGQQGWFVRCQVDIRDRPGKPLHRMLLTLSRQAGETVYQHLALRQSEGVYSPEFCQLISDFYLNY</sequence>
<reference key="1">
    <citation type="journal article" date="2007" name="PLoS Genet.">
        <title>The complete genome sequence of Yersinia pseudotuberculosis IP31758, the causative agent of Far East scarlet-like fever.</title>
        <authorList>
            <person name="Eppinger M."/>
            <person name="Rosovitz M.J."/>
            <person name="Fricke W.F."/>
            <person name="Rasko D.A."/>
            <person name="Kokorina G."/>
            <person name="Fayolle C."/>
            <person name="Lindler L.E."/>
            <person name="Carniel E."/>
            <person name="Ravel J."/>
        </authorList>
    </citation>
    <scope>NUCLEOTIDE SEQUENCE [LARGE SCALE GENOMIC DNA]</scope>
    <source>
        <strain>IP 31758</strain>
    </source>
</reference>
<feature type="chain" id="PRO_0000387458" description="tRNA1(Val) (adenine(37)-N6)-methyltransferase">
    <location>
        <begin position="1"/>
        <end position="248"/>
    </location>
</feature>
<name>TRMN6_YERP3</name>
<accession>A7FFT0</accession>